<dbReference type="EC" id="2.7.8.13" evidence="1"/>
<dbReference type="EMBL" id="CP000381">
    <property type="protein sequence ID" value="ABX73869.1"/>
    <property type="molecule type" value="Genomic_DNA"/>
</dbReference>
<dbReference type="RefSeq" id="WP_002222034.1">
    <property type="nucleotide sequence ID" value="NC_010120.1"/>
</dbReference>
<dbReference type="SMR" id="A9M2H7"/>
<dbReference type="KEGG" id="nmn:NMCC_1726"/>
<dbReference type="HOGENOM" id="CLU_023982_0_0_4"/>
<dbReference type="UniPathway" id="UPA00219"/>
<dbReference type="Proteomes" id="UP000001177">
    <property type="component" value="Chromosome"/>
</dbReference>
<dbReference type="GO" id="GO:0005886">
    <property type="term" value="C:plasma membrane"/>
    <property type="evidence" value="ECO:0007669"/>
    <property type="project" value="UniProtKB-SubCell"/>
</dbReference>
<dbReference type="GO" id="GO:0046872">
    <property type="term" value="F:metal ion binding"/>
    <property type="evidence" value="ECO:0007669"/>
    <property type="project" value="UniProtKB-KW"/>
</dbReference>
<dbReference type="GO" id="GO:0008963">
    <property type="term" value="F:phospho-N-acetylmuramoyl-pentapeptide-transferase activity"/>
    <property type="evidence" value="ECO:0007669"/>
    <property type="project" value="UniProtKB-UniRule"/>
</dbReference>
<dbReference type="GO" id="GO:0051992">
    <property type="term" value="F:UDP-N-acetylmuramoyl-L-alanyl-D-glutamyl-meso-2,6-diaminopimelyl-D-alanyl-D-alanine:undecaprenyl-phosphate transferase activity"/>
    <property type="evidence" value="ECO:0007669"/>
    <property type="project" value="RHEA"/>
</dbReference>
<dbReference type="GO" id="GO:0051301">
    <property type="term" value="P:cell division"/>
    <property type="evidence" value="ECO:0007669"/>
    <property type="project" value="UniProtKB-KW"/>
</dbReference>
<dbReference type="GO" id="GO:0071555">
    <property type="term" value="P:cell wall organization"/>
    <property type="evidence" value="ECO:0007669"/>
    <property type="project" value="UniProtKB-KW"/>
</dbReference>
<dbReference type="GO" id="GO:0009252">
    <property type="term" value="P:peptidoglycan biosynthetic process"/>
    <property type="evidence" value="ECO:0007669"/>
    <property type="project" value="UniProtKB-UniRule"/>
</dbReference>
<dbReference type="GO" id="GO:0008360">
    <property type="term" value="P:regulation of cell shape"/>
    <property type="evidence" value="ECO:0007669"/>
    <property type="project" value="UniProtKB-KW"/>
</dbReference>
<dbReference type="CDD" id="cd06852">
    <property type="entry name" value="GT_MraY"/>
    <property type="match status" value="1"/>
</dbReference>
<dbReference type="HAMAP" id="MF_00038">
    <property type="entry name" value="MraY"/>
    <property type="match status" value="1"/>
</dbReference>
<dbReference type="InterPro" id="IPR000715">
    <property type="entry name" value="Glycosyl_transferase_4"/>
</dbReference>
<dbReference type="InterPro" id="IPR003524">
    <property type="entry name" value="PNAcMuramoyl-5peptid_Trfase"/>
</dbReference>
<dbReference type="InterPro" id="IPR018480">
    <property type="entry name" value="PNAcMuramoyl-5peptid_Trfase_CS"/>
</dbReference>
<dbReference type="NCBIfam" id="TIGR00445">
    <property type="entry name" value="mraY"/>
    <property type="match status" value="1"/>
</dbReference>
<dbReference type="PANTHER" id="PTHR22926">
    <property type="entry name" value="PHOSPHO-N-ACETYLMURAMOYL-PENTAPEPTIDE-TRANSFERASE"/>
    <property type="match status" value="1"/>
</dbReference>
<dbReference type="PANTHER" id="PTHR22926:SF5">
    <property type="entry name" value="PHOSPHO-N-ACETYLMURAMOYL-PENTAPEPTIDE-TRANSFERASE HOMOLOG"/>
    <property type="match status" value="1"/>
</dbReference>
<dbReference type="Pfam" id="PF00953">
    <property type="entry name" value="Glycos_transf_4"/>
    <property type="match status" value="1"/>
</dbReference>
<dbReference type="PROSITE" id="PS01347">
    <property type="entry name" value="MRAY_1"/>
    <property type="match status" value="1"/>
</dbReference>
<dbReference type="PROSITE" id="PS01348">
    <property type="entry name" value="MRAY_2"/>
    <property type="match status" value="1"/>
</dbReference>
<keyword id="KW-0131">Cell cycle</keyword>
<keyword id="KW-0132">Cell division</keyword>
<keyword id="KW-0997">Cell inner membrane</keyword>
<keyword id="KW-1003">Cell membrane</keyword>
<keyword id="KW-0133">Cell shape</keyword>
<keyword id="KW-0961">Cell wall biogenesis/degradation</keyword>
<keyword id="KW-0460">Magnesium</keyword>
<keyword id="KW-0472">Membrane</keyword>
<keyword id="KW-0479">Metal-binding</keyword>
<keyword id="KW-0573">Peptidoglycan synthesis</keyword>
<keyword id="KW-0808">Transferase</keyword>
<keyword id="KW-0812">Transmembrane</keyword>
<keyword id="KW-1133">Transmembrane helix</keyword>
<organism>
    <name type="scientific">Neisseria meningitidis serogroup C (strain 053442)</name>
    <dbReference type="NCBI Taxonomy" id="374833"/>
    <lineage>
        <taxon>Bacteria</taxon>
        <taxon>Pseudomonadati</taxon>
        <taxon>Pseudomonadota</taxon>
        <taxon>Betaproteobacteria</taxon>
        <taxon>Neisseriales</taxon>
        <taxon>Neisseriaceae</taxon>
        <taxon>Neisseria</taxon>
    </lineage>
</organism>
<gene>
    <name evidence="1" type="primary">mraY</name>
    <name type="ordered locus">NMCC_1726</name>
</gene>
<evidence type="ECO:0000255" key="1">
    <source>
        <dbReference type="HAMAP-Rule" id="MF_00038"/>
    </source>
</evidence>
<protein>
    <recommendedName>
        <fullName evidence="1">Phospho-N-acetylmuramoyl-pentapeptide-transferase</fullName>
        <ecNumber evidence="1">2.7.8.13</ecNumber>
    </recommendedName>
    <alternativeName>
        <fullName evidence="1">UDP-MurNAc-pentapeptide phosphotransferase</fullName>
    </alternativeName>
</protein>
<feature type="chain" id="PRO_1000074549" description="Phospho-N-acetylmuramoyl-pentapeptide-transferase">
    <location>
        <begin position="1"/>
        <end position="360"/>
    </location>
</feature>
<feature type="transmembrane region" description="Helical" evidence="1">
    <location>
        <begin position="24"/>
        <end position="44"/>
    </location>
</feature>
<feature type="transmembrane region" description="Helical" evidence="1">
    <location>
        <begin position="69"/>
        <end position="89"/>
    </location>
</feature>
<feature type="transmembrane region" description="Helical" evidence="1">
    <location>
        <begin position="92"/>
        <end position="112"/>
    </location>
</feature>
<feature type="transmembrane region" description="Helical" evidence="1">
    <location>
        <begin position="133"/>
        <end position="153"/>
    </location>
</feature>
<feature type="transmembrane region" description="Helical" evidence="1">
    <location>
        <begin position="158"/>
        <end position="178"/>
    </location>
</feature>
<feature type="transmembrane region" description="Helical" evidence="1">
    <location>
        <begin position="199"/>
        <end position="219"/>
    </location>
</feature>
<feature type="transmembrane region" description="Helical" evidence="1">
    <location>
        <begin position="239"/>
        <end position="259"/>
    </location>
</feature>
<feature type="transmembrane region" description="Helical" evidence="1">
    <location>
        <begin position="263"/>
        <end position="283"/>
    </location>
</feature>
<feature type="transmembrane region" description="Helical" evidence="1">
    <location>
        <begin position="288"/>
        <end position="308"/>
    </location>
</feature>
<feature type="transmembrane region" description="Helical" evidence="1">
    <location>
        <begin position="337"/>
        <end position="357"/>
    </location>
</feature>
<name>MRAY_NEIM0</name>
<reference key="1">
    <citation type="journal article" date="2008" name="Genomics">
        <title>Characterization of ST-4821 complex, a unique Neisseria meningitidis clone.</title>
        <authorList>
            <person name="Peng J."/>
            <person name="Yang L."/>
            <person name="Yang F."/>
            <person name="Yang J."/>
            <person name="Yan Y."/>
            <person name="Nie H."/>
            <person name="Zhang X."/>
            <person name="Xiong Z."/>
            <person name="Jiang Y."/>
            <person name="Cheng F."/>
            <person name="Xu X."/>
            <person name="Chen S."/>
            <person name="Sun L."/>
            <person name="Li W."/>
            <person name="Shen Y."/>
            <person name="Shao Z."/>
            <person name="Liang X."/>
            <person name="Xu J."/>
            <person name="Jin Q."/>
        </authorList>
    </citation>
    <scope>NUCLEOTIDE SEQUENCE [LARGE SCALE GENOMIC DNA]</scope>
    <source>
        <strain>053442</strain>
    </source>
</reference>
<accession>A9M2H7</accession>
<proteinExistence type="inferred from homology"/>
<sequence length="360" mass="39390">MFLWLAHFSNWLTGLNIFQYTTFRAVMAALTALAFSLMFGPWTIRRLTALKCGQAVRTDGPQTHLVKNGTPTMGGSLILTAITVSTLLWGNWANPYIWILLGVLLATGALGFYDDWRKVVYKDPNGVSAKFKMVWQSSVAIIAGLALFYLAANSANNILIVPFFKQIALPLGVVGFLVLSYLTIVGTSNAVNLTDGLDGLATFPVVLVAAGLAIFAYVSGHYQFSQYLQLPYVAGANEVAIFCTAMCGACLGFLWFNAYPAQVFMGDVGALALGAALGTVAVIVRQEFVLVIMGGLFVVEAVSVMLQVGWYKKTKKRIFLMAPIHHHYEQKGWKETQVVVRFWIITIVLVLIGLSTLKIR</sequence>
<comment type="function">
    <text evidence="1">Catalyzes the initial step of the lipid cycle reactions in the biosynthesis of the cell wall peptidoglycan: transfers peptidoglycan precursor phospho-MurNAc-pentapeptide from UDP-MurNAc-pentapeptide onto the lipid carrier undecaprenyl phosphate, yielding undecaprenyl-pyrophosphoryl-MurNAc-pentapeptide, known as lipid I.</text>
</comment>
<comment type="catalytic activity">
    <reaction evidence="1">
        <text>UDP-N-acetyl-alpha-D-muramoyl-L-alanyl-gamma-D-glutamyl-meso-2,6-diaminopimeloyl-D-alanyl-D-alanine + di-trans,octa-cis-undecaprenyl phosphate = di-trans,octa-cis-undecaprenyl diphospho-N-acetyl-alpha-D-muramoyl-L-alanyl-D-glutamyl-meso-2,6-diaminopimeloyl-D-alanyl-D-alanine + UMP</text>
        <dbReference type="Rhea" id="RHEA:28386"/>
        <dbReference type="ChEBI" id="CHEBI:57865"/>
        <dbReference type="ChEBI" id="CHEBI:60392"/>
        <dbReference type="ChEBI" id="CHEBI:61386"/>
        <dbReference type="ChEBI" id="CHEBI:61387"/>
        <dbReference type="EC" id="2.7.8.13"/>
    </reaction>
</comment>
<comment type="cofactor">
    <cofactor evidence="1">
        <name>Mg(2+)</name>
        <dbReference type="ChEBI" id="CHEBI:18420"/>
    </cofactor>
</comment>
<comment type="pathway">
    <text evidence="1">Cell wall biogenesis; peptidoglycan biosynthesis.</text>
</comment>
<comment type="subcellular location">
    <subcellularLocation>
        <location evidence="1">Cell inner membrane</location>
        <topology evidence="1">Multi-pass membrane protein</topology>
    </subcellularLocation>
</comment>
<comment type="similarity">
    <text evidence="1">Belongs to the glycosyltransferase 4 family. MraY subfamily.</text>
</comment>